<accession>Q92I14</accession>
<sequence length="120" mass="13899">MKKLTKTHSHRQQKLASIINEALIEILRRGKMLDSRLFDCPLTITKVIVTADLKIANCYFLPFNTKLTIDEIMDALNNSKNAIRNFITNKINMKFSPDIRFHYDHGFDNAIKVAHLLKDL</sequence>
<feature type="chain" id="PRO_0000102721" description="Ribosome-binding factor A">
    <location>
        <begin position="1"/>
        <end position="120"/>
    </location>
</feature>
<evidence type="ECO:0000255" key="1">
    <source>
        <dbReference type="HAMAP-Rule" id="MF_00003"/>
    </source>
</evidence>
<reference key="1">
    <citation type="journal article" date="2001" name="Science">
        <title>Mechanisms of evolution in Rickettsia conorii and R. prowazekii.</title>
        <authorList>
            <person name="Ogata H."/>
            <person name="Audic S."/>
            <person name="Renesto-Audiffren P."/>
            <person name="Fournier P.-E."/>
            <person name="Barbe V."/>
            <person name="Samson D."/>
            <person name="Roux V."/>
            <person name="Cossart P."/>
            <person name="Weissenbach J."/>
            <person name="Claverie J.-M."/>
            <person name="Raoult D."/>
        </authorList>
    </citation>
    <scope>NUCLEOTIDE SEQUENCE [LARGE SCALE GENOMIC DNA]</scope>
    <source>
        <strain>ATCC VR-613 / Malish 7</strain>
    </source>
</reference>
<organism>
    <name type="scientific">Rickettsia conorii (strain ATCC VR-613 / Malish 7)</name>
    <dbReference type="NCBI Taxonomy" id="272944"/>
    <lineage>
        <taxon>Bacteria</taxon>
        <taxon>Pseudomonadati</taxon>
        <taxon>Pseudomonadota</taxon>
        <taxon>Alphaproteobacteria</taxon>
        <taxon>Rickettsiales</taxon>
        <taxon>Rickettsiaceae</taxon>
        <taxon>Rickettsieae</taxon>
        <taxon>Rickettsia</taxon>
        <taxon>spotted fever group</taxon>
    </lineage>
</organism>
<protein>
    <recommendedName>
        <fullName evidence="1">Ribosome-binding factor A</fullName>
    </recommendedName>
</protein>
<proteinExistence type="inferred from homology"/>
<name>RBFA_RICCN</name>
<dbReference type="EMBL" id="AE006914">
    <property type="protein sequence ID" value="AAL03144.1"/>
    <property type="molecule type" value="Genomic_DNA"/>
</dbReference>
<dbReference type="PIR" id="F97775">
    <property type="entry name" value="F97775"/>
</dbReference>
<dbReference type="RefSeq" id="WP_010977237.1">
    <property type="nucleotide sequence ID" value="NC_003103.1"/>
</dbReference>
<dbReference type="SMR" id="Q92I14"/>
<dbReference type="GeneID" id="927698"/>
<dbReference type="KEGG" id="rco:RC0606"/>
<dbReference type="HOGENOM" id="CLU_089475_1_0_5"/>
<dbReference type="Proteomes" id="UP000000816">
    <property type="component" value="Chromosome"/>
</dbReference>
<dbReference type="GO" id="GO:0005829">
    <property type="term" value="C:cytosol"/>
    <property type="evidence" value="ECO:0007669"/>
    <property type="project" value="TreeGrafter"/>
</dbReference>
<dbReference type="GO" id="GO:0043024">
    <property type="term" value="F:ribosomal small subunit binding"/>
    <property type="evidence" value="ECO:0007669"/>
    <property type="project" value="TreeGrafter"/>
</dbReference>
<dbReference type="GO" id="GO:0030490">
    <property type="term" value="P:maturation of SSU-rRNA"/>
    <property type="evidence" value="ECO:0007669"/>
    <property type="project" value="UniProtKB-UniRule"/>
</dbReference>
<dbReference type="Gene3D" id="3.30.300.20">
    <property type="match status" value="1"/>
</dbReference>
<dbReference type="HAMAP" id="MF_00003">
    <property type="entry name" value="RbfA"/>
    <property type="match status" value="1"/>
</dbReference>
<dbReference type="InterPro" id="IPR015946">
    <property type="entry name" value="KH_dom-like_a/b"/>
</dbReference>
<dbReference type="InterPro" id="IPR000238">
    <property type="entry name" value="RbfA"/>
</dbReference>
<dbReference type="InterPro" id="IPR023799">
    <property type="entry name" value="RbfA_dom_sf"/>
</dbReference>
<dbReference type="InterPro" id="IPR020053">
    <property type="entry name" value="Ribosome-bd_factorA_CS"/>
</dbReference>
<dbReference type="NCBIfam" id="NF001799">
    <property type="entry name" value="PRK00521.2-2"/>
    <property type="match status" value="1"/>
</dbReference>
<dbReference type="NCBIfam" id="TIGR00082">
    <property type="entry name" value="rbfA"/>
    <property type="match status" value="1"/>
</dbReference>
<dbReference type="PANTHER" id="PTHR33515">
    <property type="entry name" value="RIBOSOME-BINDING FACTOR A, CHLOROPLASTIC-RELATED"/>
    <property type="match status" value="1"/>
</dbReference>
<dbReference type="PANTHER" id="PTHR33515:SF1">
    <property type="entry name" value="RIBOSOME-BINDING FACTOR A, CHLOROPLASTIC-RELATED"/>
    <property type="match status" value="1"/>
</dbReference>
<dbReference type="Pfam" id="PF02033">
    <property type="entry name" value="RBFA"/>
    <property type="match status" value="1"/>
</dbReference>
<dbReference type="SUPFAM" id="SSF89919">
    <property type="entry name" value="Ribosome-binding factor A, RbfA"/>
    <property type="match status" value="1"/>
</dbReference>
<dbReference type="PROSITE" id="PS01319">
    <property type="entry name" value="RBFA"/>
    <property type="match status" value="1"/>
</dbReference>
<gene>
    <name evidence="1" type="primary">rbfA</name>
    <name type="ordered locus">RC0606</name>
</gene>
<comment type="function">
    <text evidence="1">One of several proteins that assist in the late maturation steps of the functional core of the 30S ribosomal subunit. Associates with free 30S ribosomal subunits (but not with 30S subunits that are part of 70S ribosomes or polysomes). Required for efficient processing of 16S rRNA. May interact with the 5'-terminal helix region of 16S rRNA.</text>
</comment>
<comment type="subunit">
    <text evidence="1">Monomer. Binds 30S ribosomal subunits, but not 50S ribosomal subunits or 70S ribosomes.</text>
</comment>
<comment type="subcellular location">
    <subcellularLocation>
        <location evidence="1">Cytoplasm</location>
    </subcellularLocation>
</comment>
<comment type="similarity">
    <text evidence="1">Belongs to the RbfA family.</text>
</comment>
<keyword id="KW-0963">Cytoplasm</keyword>
<keyword id="KW-0690">Ribosome biogenesis</keyword>